<organism>
    <name type="scientific">Xanthobacter autotrophicus (strain ATCC BAA-1158 / Py2)</name>
    <dbReference type="NCBI Taxonomy" id="78245"/>
    <lineage>
        <taxon>Bacteria</taxon>
        <taxon>Pseudomonadati</taxon>
        <taxon>Pseudomonadota</taxon>
        <taxon>Alphaproteobacteria</taxon>
        <taxon>Hyphomicrobiales</taxon>
        <taxon>Xanthobacteraceae</taxon>
        <taxon>Xanthobacter</taxon>
    </lineage>
</organism>
<gene>
    <name evidence="1" type="primary">nuoC</name>
    <name type="ordered locus">Xaut_4631</name>
</gene>
<keyword id="KW-0997">Cell inner membrane</keyword>
<keyword id="KW-1003">Cell membrane</keyword>
<keyword id="KW-0472">Membrane</keyword>
<keyword id="KW-0520">NAD</keyword>
<keyword id="KW-0874">Quinone</keyword>
<keyword id="KW-1185">Reference proteome</keyword>
<keyword id="KW-1278">Translocase</keyword>
<keyword id="KW-0813">Transport</keyword>
<keyword id="KW-0830">Ubiquinone</keyword>
<accession>A7IPA5</accession>
<evidence type="ECO:0000255" key="1">
    <source>
        <dbReference type="HAMAP-Rule" id="MF_01357"/>
    </source>
</evidence>
<feature type="chain" id="PRO_0000358222" description="NADH-quinone oxidoreductase subunit C">
    <location>
        <begin position="1"/>
        <end position="209"/>
    </location>
</feature>
<proteinExistence type="inferred from homology"/>
<reference key="1">
    <citation type="submission" date="2007-07" db="EMBL/GenBank/DDBJ databases">
        <title>Complete sequence of chromosome of Xanthobacter autotrophicus Py2.</title>
        <authorList>
            <consortium name="US DOE Joint Genome Institute"/>
            <person name="Copeland A."/>
            <person name="Lucas S."/>
            <person name="Lapidus A."/>
            <person name="Barry K."/>
            <person name="Glavina del Rio T."/>
            <person name="Hammon N."/>
            <person name="Israni S."/>
            <person name="Dalin E."/>
            <person name="Tice H."/>
            <person name="Pitluck S."/>
            <person name="Sims D."/>
            <person name="Brettin T."/>
            <person name="Bruce D."/>
            <person name="Detter J.C."/>
            <person name="Han C."/>
            <person name="Tapia R."/>
            <person name="Brainard J."/>
            <person name="Schmutz J."/>
            <person name="Larimer F."/>
            <person name="Land M."/>
            <person name="Hauser L."/>
            <person name="Kyrpides N."/>
            <person name="Kim E."/>
            <person name="Ensigns S.A."/>
            <person name="Richardson P."/>
        </authorList>
    </citation>
    <scope>NUCLEOTIDE SEQUENCE [LARGE SCALE GENOMIC DNA]</scope>
    <source>
        <strain>ATCC BAA-1158 / Py2</strain>
    </source>
</reference>
<dbReference type="EC" id="7.1.1.-" evidence="1"/>
<dbReference type="EMBL" id="CP000781">
    <property type="protein sequence ID" value="ABS69851.1"/>
    <property type="molecule type" value="Genomic_DNA"/>
</dbReference>
<dbReference type="SMR" id="A7IPA5"/>
<dbReference type="STRING" id="78245.Xaut_4631"/>
<dbReference type="KEGG" id="xau:Xaut_4631"/>
<dbReference type="eggNOG" id="COG0852">
    <property type="taxonomic scope" value="Bacteria"/>
</dbReference>
<dbReference type="HOGENOM" id="CLU_042628_2_1_5"/>
<dbReference type="OrthoDB" id="9803286at2"/>
<dbReference type="PhylomeDB" id="A7IPA5"/>
<dbReference type="Proteomes" id="UP000002417">
    <property type="component" value="Chromosome"/>
</dbReference>
<dbReference type="GO" id="GO:0005886">
    <property type="term" value="C:plasma membrane"/>
    <property type="evidence" value="ECO:0007669"/>
    <property type="project" value="UniProtKB-SubCell"/>
</dbReference>
<dbReference type="GO" id="GO:0008137">
    <property type="term" value="F:NADH dehydrogenase (ubiquinone) activity"/>
    <property type="evidence" value="ECO:0007669"/>
    <property type="project" value="InterPro"/>
</dbReference>
<dbReference type="GO" id="GO:0050136">
    <property type="term" value="F:NADH:ubiquinone reductase (non-electrogenic) activity"/>
    <property type="evidence" value="ECO:0007669"/>
    <property type="project" value="UniProtKB-UniRule"/>
</dbReference>
<dbReference type="GO" id="GO:0048038">
    <property type="term" value="F:quinone binding"/>
    <property type="evidence" value="ECO:0007669"/>
    <property type="project" value="UniProtKB-KW"/>
</dbReference>
<dbReference type="Gene3D" id="3.30.460.80">
    <property type="entry name" value="NADH:ubiquinone oxidoreductase, 30kDa subunit"/>
    <property type="match status" value="1"/>
</dbReference>
<dbReference type="HAMAP" id="MF_01357">
    <property type="entry name" value="NDH1_NuoC"/>
    <property type="match status" value="1"/>
</dbReference>
<dbReference type="InterPro" id="IPR010218">
    <property type="entry name" value="NADH_DH_suC"/>
</dbReference>
<dbReference type="InterPro" id="IPR037232">
    <property type="entry name" value="NADH_quin_OxRdtase_su_C/D-like"/>
</dbReference>
<dbReference type="InterPro" id="IPR001268">
    <property type="entry name" value="NADH_UbQ_OxRdtase_30kDa_su"/>
</dbReference>
<dbReference type="InterPro" id="IPR020396">
    <property type="entry name" value="NADH_UbQ_OxRdtase_CS"/>
</dbReference>
<dbReference type="NCBIfam" id="TIGR01961">
    <property type="entry name" value="NuoC_fam"/>
    <property type="match status" value="1"/>
</dbReference>
<dbReference type="NCBIfam" id="NF004730">
    <property type="entry name" value="PRK06074.1-1"/>
    <property type="match status" value="1"/>
</dbReference>
<dbReference type="NCBIfam" id="NF004733">
    <property type="entry name" value="PRK06074.1-5"/>
    <property type="match status" value="1"/>
</dbReference>
<dbReference type="PANTHER" id="PTHR10884:SF14">
    <property type="entry name" value="NADH DEHYDROGENASE [UBIQUINONE] IRON-SULFUR PROTEIN 3, MITOCHONDRIAL"/>
    <property type="match status" value="1"/>
</dbReference>
<dbReference type="PANTHER" id="PTHR10884">
    <property type="entry name" value="NADH DEHYDROGENASE UBIQUINONE IRON-SULFUR PROTEIN 3"/>
    <property type="match status" value="1"/>
</dbReference>
<dbReference type="Pfam" id="PF00329">
    <property type="entry name" value="Complex1_30kDa"/>
    <property type="match status" value="1"/>
</dbReference>
<dbReference type="SUPFAM" id="SSF143243">
    <property type="entry name" value="Nqo5-like"/>
    <property type="match status" value="1"/>
</dbReference>
<dbReference type="PROSITE" id="PS00542">
    <property type="entry name" value="COMPLEX1_30K"/>
    <property type="match status" value="1"/>
</dbReference>
<sequence length="209" mass="23537">MDETLNDLAAHVSAALSGAVLGSLVAHGELTLQIDPAQIVKVATFLRDDPACLFHCIVDVCGVDYPAREKRFDVVYHLLSLKQNVRIRLKVETDEDTPVPSICSVFPGANWFEREAYDMYGILFTGHPELRRLLTDYGFDGHPLRKDFPTTGFVEVRYDDEQKRVVYEPVRLPQEFRNFDFLSPWEGVEYVLPGDEKASGQPPVPPKAG</sequence>
<name>NUOC_XANP2</name>
<comment type="function">
    <text evidence="1">NDH-1 shuttles electrons from NADH, via FMN and iron-sulfur (Fe-S) centers, to quinones in the respiratory chain. The immediate electron acceptor for the enzyme in this species is believed to be ubiquinone. Couples the redox reaction to proton translocation (for every two electrons transferred, four hydrogen ions are translocated across the cytoplasmic membrane), and thus conserves the redox energy in a proton gradient.</text>
</comment>
<comment type="catalytic activity">
    <reaction evidence="1">
        <text>a quinone + NADH + 5 H(+)(in) = a quinol + NAD(+) + 4 H(+)(out)</text>
        <dbReference type="Rhea" id="RHEA:57888"/>
        <dbReference type="ChEBI" id="CHEBI:15378"/>
        <dbReference type="ChEBI" id="CHEBI:24646"/>
        <dbReference type="ChEBI" id="CHEBI:57540"/>
        <dbReference type="ChEBI" id="CHEBI:57945"/>
        <dbReference type="ChEBI" id="CHEBI:132124"/>
    </reaction>
</comment>
<comment type="subunit">
    <text evidence="1">NDH-1 is composed of 14 different subunits. Subunits NuoB, C, D, E, F, and G constitute the peripheral sector of the complex.</text>
</comment>
<comment type="subcellular location">
    <subcellularLocation>
        <location evidence="1">Cell inner membrane</location>
        <topology evidence="1">Peripheral membrane protein</topology>
        <orientation evidence="1">Cytoplasmic side</orientation>
    </subcellularLocation>
</comment>
<comment type="similarity">
    <text evidence="1">Belongs to the complex I 30 kDa subunit family.</text>
</comment>
<protein>
    <recommendedName>
        <fullName evidence="1">NADH-quinone oxidoreductase subunit C</fullName>
        <ecNumber evidence="1">7.1.1.-</ecNumber>
    </recommendedName>
    <alternativeName>
        <fullName evidence="1">NADH dehydrogenase I subunit C</fullName>
    </alternativeName>
    <alternativeName>
        <fullName evidence="1">NDH-1 subunit C</fullName>
    </alternativeName>
</protein>